<name>GATC_RHOE4</name>
<reference key="1">
    <citation type="submission" date="2005-03" db="EMBL/GenBank/DDBJ databases">
        <title>Comparison of the complete genome sequences of Rhodococcus erythropolis PR4 and Rhodococcus opacus B4.</title>
        <authorList>
            <person name="Takarada H."/>
            <person name="Sekine M."/>
            <person name="Hosoyama A."/>
            <person name="Yamada R."/>
            <person name="Fujisawa T."/>
            <person name="Omata S."/>
            <person name="Shimizu A."/>
            <person name="Tsukatani N."/>
            <person name="Tanikawa S."/>
            <person name="Fujita N."/>
            <person name="Harayama S."/>
        </authorList>
    </citation>
    <scope>NUCLEOTIDE SEQUENCE [LARGE SCALE GENOMIC DNA]</scope>
    <source>
        <strain>PR4 / NBRC 100887</strain>
    </source>
</reference>
<accession>C0ZXK6</accession>
<dbReference type="EC" id="6.3.5.-" evidence="1"/>
<dbReference type="EMBL" id="AP008957">
    <property type="protein sequence ID" value="BAH33091.1"/>
    <property type="molecule type" value="Genomic_DNA"/>
</dbReference>
<dbReference type="RefSeq" id="WP_003944747.1">
    <property type="nucleotide sequence ID" value="NC_012490.1"/>
</dbReference>
<dbReference type="SMR" id="C0ZXK6"/>
<dbReference type="GeneID" id="93803375"/>
<dbReference type="KEGG" id="rer:RER_23830"/>
<dbReference type="eggNOG" id="COG0721">
    <property type="taxonomic scope" value="Bacteria"/>
</dbReference>
<dbReference type="HOGENOM" id="CLU_105899_1_0_11"/>
<dbReference type="Proteomes" id="UP000002204">
    <property type="component" value="Chromosome"/>
</dbReference>
<dbReference type="GO" id="GO:0050566">
    <property type="term" value="F:asparaginyl-tRNA synthase (glutamine-hydrolyzing) activity"/>
    <property type="evidence" value="ECO:0007669"/>
    <property type="project" value="RHEA"/>
</dbReference>
<dbReference type="GO" id="GO:0005524">
    <property type="term" value="F:ATP binding"/>
    <property type="evidence" value="ECO:0007669"/>
    <property type="project" value="UniProtKB-KW"/>
</dbReference>
<dbReference type="GO" id="GO:0050567">
    <property type="term" value="F:glutaminyl-tRNA synthase (glutamine-hydrolyzing) activity"/>
    <property type="evidence" value="ECO:0007669"/>
    <property type="project" value="UniProtKB-UniRule"/>
</dbReference>
<dbReference type="GO" id="GO:0070681">
    <property type="term" value="P:glutaminyl-tRNAGln biosynthesis via transamidation"/>
    <property type="evidence" value="ECO:0007669"/>
    <property type="project" value="TreeGrafter"/>
</dbReference>
<dbReference type="GO" id="GO:0006450">
    <property type="term" value="P:regulation of translational fidelity"/>
    <property type="evidence" value="ECO:0007669"/>
    <property type="project" value="InterPro"/>
</dbReference>
<dbReference type="GO" id="GO:0006412">
    <property type="term" value="P:translation"/>
    <property type="evidence" value="ECO:0007669"/>
    <property type="project" value="UniProtKB-UniRule"/>
</dbReference>
<dbReference type="Gene3D" id="1.10.20.60">
    <property type="entry name" value="Glu-tRNAGln amidotransferase C subunit, N-terminal domain"/>
    <property type="match status" value="1"/>
</dbReference>
<dbReference type="HAMAP" id="MF_00122">
    <property type="entry name" value="GatC"/>
    <property type="match status" value="1"/>
</dbReference>
<dbReference type="InterPro" id="IPR036113">
    <property type="entry name" value="Asp/Glu-ADT_sf_sub_c"/>
</dbReference>
<dbReference type="InterPro" id="IPR003837">
    <property type="entry name" value="GatC"/>
</dbReference>
<dbReference type="NCBIfam" id="TIGR00135">
    <property type="entry name" value="gatC"/>
    <property type="match status" value="1"/>
</dbReference>
<dbReference type="PANTHER" id="PTHR15004">
    <property type="entry name" value="GLUTAMYL-TRNA(GLN) AMIDOTRANSFERASE SUBUNIT C, MITOCHONDRIAL"/>
    <property type="match status" value="1"/>
</dbReference>
<dbReference type="PANTHER" id="PTHR15004:SF0">
    <property type="entry name" value="GLUTAMYL-TRNA(GLN) AMIDOTRANSFERASE SUBUNIT C, MITOCHONDRIAL"/>
    <property type="match status" value="1"/>
</dbReference>
<dbReference type="Pfam" id="PF02686">
    <property type="entry name" value="GatC"/>
    <property type="match status" value="1"/>
</dbReference>
<dbReference type="SUPFAM" id="SSF141000">
    <property type="entry name" value="Glu-tRNAGln amidotransferase C subunit"/>
    <property type="match status" value="1"/>
</dbReference>
<feature type="chain" id="PRO_1000203076" description="Aspartyl/glutamyl-tRNA(Asn/Gln) amidotransferase subunit C">
    <location>
        <begin position="1"/>
        <end position="99"/>
    </location>
</feature>
<protein>
    <recommendedName>
        <fullName evidence="1">Aspartyl/glutamyl-tRNA(Asn/Gln) amidotransferase subunit C</fullName>
        <shortName evidence="1">Asp/Glu-ADT subunit C</shortName>
        <ecNumber evidence="1">6.3.5.-</ecNumber>
    </recommendedName>
</protein>
<evidence type="ECO:0000255" key="1">
    <source>
        <dbReference type="HAMAP-Rule" id="MF_00122"/>
    </source>
</evidence>
<sequence>MPAISRDEVAHLARLSRLALSDAELDEFAGQLDSILNHVKVVTEVAADDVPPMANPNAVTNVTRPDVIVPGLTPEQALSGAPAVEQDRFAVPQILGEGE</sequence>
<keyword id="KW-0067">ATP-binding</keyword>
<keyword id="KW-0436">Ligase</keyword>
<keyword id="KW-0547">Nucleotide-binding</keyword>
<keyword id="KW-0648">Protein biosynthesis</keyword>
<comment type="function">
    <text evidence="1">Allows the formation of correctly charged Asn-tRNA(Asn) or Gln-tRNA(Gln) through the transamidation of misacylated Asp-tRNA(Asn) or Glu-tRNA(Gln) in organisms which lack either or both of asparaginyl-tRNA or glutaminyl-tRNA synthetases. The reaction takes place in the presence of glutamine and ATP through an activated phospho-Asp-tRNA(Asn) or phospho-Glu-tRNA(Gln).</text>
</comment>
<comment type="catalytic activity">
    <reaction evidence="1">
        <text>L-glutamyl-tRNA(Gln) + L-glutamine + ATP + H2O = L-glutaminyl-tRNA(Gln) + L-glutamate + ADP + phosphate + H(+)</text>
        <dbReference type="Rhea" id="RHEA:17521"/>
        <dbReference type="Rhea" id="RHEA-COMP:9681"/>
        <dbReference type="Rhea" id="RHEA-COMP:9684"/>
        <dbReference type="ChEBI" id="CHEBI:15377"/>
        <dbReference type="ChEBI" id="CHEBI:15378"/>
        <dbReference type="ChEBI" id="CHEBI:29985"/>
        <dbReference type="ChEBI" id="CHEBI:30616"/>
        <dbReference type="ChEBI" id="CHEBI:43474"/>
        <dbReference type="ChEBI" id="CHEBI:58359"/>
        <dbReference type="ChEBI" id="CHEBI:78520"/>
        <dbReference type="ChEBI" id="CHEBI:78521"/>
        <dbReference type="ChEBI" id="CHEBI:456216"/>
    </reaction>
</comment>
<comment type="catalytic activity">
    <reaction evidence="1">
        <text>L-aspartyl-tRNA(Asn) + L-glutamine + ATP + H2O = L-asparaginyl-tRNA(Asn) + L-glutamate + ADP + phosphate + 2 H(+)</text>
        <dbReference type="Rhea" id="RHEA:14513"/>
        <dbReference type="Rhea" id="RHEA-COMP:9674"/>
        <dbReference type="Rhea" id="RHEA-COMP:9677"/>
        <dbReference type="ChEBI" id="CHEBI:15377"/>
        <dbReference type="ChEBI" id="CHEBI:15378"/>
        <dbReference type="ChEBI" id="CHEBI:29985"/>
        <dbReference type="ChEBI" id="CHEBI:30616"/>
        <dbReference type="ChEBI" id="CHEBI:43474"/>
        <dbReference type="ChEBI" id="CHEBI:58359"/>
        <dbReference type="ChEBI" id="CHEBI:78515"/>
        <dbReference type="ChEBI" id="CHEBI:78516"/>
        <dbReference type="ChEBI" id="CHEBI:456216"/>
    </reaction>
</comment>
<comment type="subunit">
    <text evidence="1">Heterotrimer of A, B and C subunits.</text>
</comment>
<comment type="similarity">
    <text evidence="1">Belongs to the GatC family.</text>
</comment>
<organism>
    <name type="scientific">Rhodococcus erythropolis (strain PR4 / NBRC 100887)</name>
    <dbReference type="NCBI Taxonomy" id="234621"/>
    <lineage>
        <taxon>Bacteria</taxon>
        <taxon>Bacillati</taxon>
        <taxon>Actinomycetota</taxon>
        <taxon>Actinomycetes</taxon>
        <taxon>Mycobacteriales</taxon>
        <taxon>Nocardiaceae</taxon>
        <taxon>Rhodococcus</taxon>
        <taxon>Rhodococcus erythropolis group</taxon>
    </lineage>
</organism>
<gene>
    <name evidence="1" type="primary">gatC</name>
    <name type="ordered locus">RER_23830</name>
</gene>
<proteinExistence type="inferred from homology"/>